<organism>
    <name type="scientific">Methanopyrus kandleri (strain AV19 / DSM 6324 / JCM 9639 / NBRC 100938)</name>
    <dbReference type="NCBI Taxonomy" id="190192"/>
    <lineage>
        <taxon>Archaea</taxon>
        <taxon>Methanobacteriati</taxon>
        <taxon>Methanobacteriota</taxon>
        <taxon>Methanomada group</taxon>
        <taxon>Methanopyri</taxon>
        <taxon>Methanopyrales</taxon>
        <taxon>Methanopyraceae</taxon>
        <taxon>Methanopyrus</taxon>
    </lineage>
</organism>
<accession>Q8TXW8</accession>
<name>AGOG_METKA</name>
<evidence type="ECO:0000255" key="1">
    <source>
        <dbReference type="HAMAP-Rule" id="MF_01168"/>
    </source>
</evidence>
<feature type="chain" id="PRO_0000185110" description="N-glycosylase/DNA lyase">
    <location>
        <begin position="1"/>
        <end position="242"/>
    </location>
</feature>
<feature type="region of interest" description="Helix-hairpin-helix">
    <location>
        <begin position="119"/>
        <end position="183"/>
    </location>
</feature>
<feature type="active site" description="Schiff-base intermediate with DNA" evidence="1">
    <location>
        <position position="143"/>
    </location>
</feature>
<feature type="active site" evidence="1">
    <location>
        <position position="175"/>
    </location>
</feature>
<feature type="binding site" evidence="1">
    <location>
        <position position="25"/>
    </location>
    <ligand>
        <name>8-oxoguanine</name>
        <dbReference type="ChEBI" id="CHEBI:52617"/>
    </ligand>
</feature>
<feature type="binding site" evidence="1">
    <location>
        <position position="52"/>
    </location>
    <ligand>
        <name>8-oxoguanine</name>
        <dbReference type="ChEBI" id="CHEBI:52617"/>
    </ligand>
</feature>
<feature type="binding site" evidence="1">
    <location>
        <position position="63"/>
    </location>
    <ligand>
        <name>8-oxoguanine</name>
        <dbReference type="ChEBI" id="CHEBI:52617"/>
    </ligand>
</feature>
<feature type="binding site" evidence="1">
    <location>
        <position position="147"/>
    </location>
    <ligand>
        <name>8-oxoguanine</name>
        <dbReference type="ChEBI" id="CHEBI:52617"/>
    </ligand>
</feature>
<feature type="binding site" evidence="1">
    <location>
        <position position="173"/>
    </location>
    <ligand>
        <name>8-oxoguanine</name>
        <dbReference type="ChEBI" id="CHEBI:52617"/>
    </ligand>
</feature>
<feature type="binding site" evidence="1">
    <location>
        <position position="209"/>
    </location>
    <ligand>
        <name>8-oxoguanine</name>
        <dbReference type="ChEBI" id="CHEBI:52617"/>
    </ligand>
</feature>
<feature type="binding site" evidence="1">
    <location>
        <position position="213"/>
    </location>
    <ligand>
        <name>8-oxoguanine</name>
        <dbReference type="ChEBI" id="CHEBI:52617"/>
    </ligand>
</feature>
<dbReference type="EC" id="3.2.2.-" evidence="1"/>
<dbReference type="EC" id="4.2.99.18" evidence="1"/>
<dbReference type="EMBL" id="AE009439">
    <property type="protein sequence ID" value="AAM01756.1"/>
    <property type="molecule type" value="Genomic_DNA"/>
</dbReference>
<dbReference type="RefSeq" id="WP_011018911.1">
    <property type="nucleotide sequence ID" value="NC_003551.1"/>
</dbReference>
<dbReference type="SMR" id="Q8TXW8"/>
<dbReference type="STRING" id="190192.MK0541"/>
<dbReference type="PaxDb" id="190192-MK0541"/>
<dbReference type="EnsemblBacteria" id="AAM01756">
    <property type="protein sequence ID" value="AAM01756"/>
    <property type="gene ID" value="MK0541"/>
</dbReference>
<dbReference type="GeneID" id="1476642"/>
<dbReference type="KEGG" id="mka:MK0541"/>
<dbReference type="PATRIC" id="fig|190192.8.peg.576"/>
<dbReference type="HOGENOM" id="CLU_085935_0_0_2"/>
<dbReference type="InParanoid" id="Q8TXW8"/>
<dbReference type="OrthoDB" id="15106at2157"/>
<dbReference type="Proteomes" id="UP000001826">
    <property type="component" value="Chromosome"/>
</dbReference>
<dbReference type="GO" id="GO:0140078">
    <property type="term" value="F:class I DNA-(apurinic or apyrimidinic site) endonuclease activity"/>
    <property type="evidence" value="ECO:0007669"/>
    <property type="project" value="UniProtKB-EC"/>
</dbReference>
<dbReference type="GO" id="GO:0000702">
    <property type="term" value="F:oxidized base lesion DNA N-glycosylase activity"/>
    <property type="evidence" value="ECO:0007669"/>
    <property type="project" value="UniProtKB-UniRule"/>
</dbReference>
<dbReference type="GO" id="GO:0006284">
    <property type="term" value="P:base-excision repair"/>
    <property type="evidence" value="ECO:0007669"/>
    <property type="project" value="UniProtKB-UniRule"/>
</dbReference>
<dbReference type="Gene3D" id="1.10.340.30">
    <property type="entry name" value="Hypothetical protein, domain 2"/>
    <property type="match status" value="1"/>
</dbReference>
<dbReference type="HAMAP" id="MF_01168">
    <property type="entry name" value="AGOG"/>
    <property type="match status" value="1"/>
</dbReference>
<dbReference type="InterPro" id="IPR016544">
    <property type="entry name" value="AGOG"/>
</dbReference>
<dbReference type="InterPro" id="IPR015254">
    <property type="entry name" value="AGOG-like"/>
</dbReference>
<dbReference type="InterPro" id="IPR011257">
    <property type="entry name" value="DNA_glycosylase"/>
</dbReference>
<dbReference type="NCBIfam" id="NF009785">
    <property type="entry name" value="PRK13280.1-2"/>
    <property type="match status" value="1"/>
</dbReference>
<dbReference type="Pfam" id="PF09171">
    <property type="entry name" value="AGOG"/>
    <property type="match status" value="1"/>
</dbReference>
<dbReference type="PIRSF" id="PIRSF008955">
    <property type="entry name" value="AGOG"/>
    <property type="match status" value="1"/>
</dbReference>
<dbReference type="SUPFAM" id="SSF48150">
    <property type="entry name" value="DNA-glycosylase"/>
    <property type="match status" value="1"/>
</dbReference>
<keyword id="KW-0227">DNA damage</keyword>
<keyword id="KW-0228">DNA excision</keyword>
<keyword id="KW-0234">DNA repair</keyword>
<keyword id="KW-0378">Hydrolase</keyword>
<keyword id="KW-0456">Lyase</keyword>
<keyword id="KW-1185">Reference proteome</keyword>
<protein>
    <recommendedName>
        <fullName evidence="1">N-glycosylase/DNA lyase</fullName>
    </recommendedName>
    <alternativeName>
        <fullName evidence="1">8-oxoguanine DNA glycosylase</fullName>
        <ecNumber evidence="1">3.2.2.-</ecNumber>
    </alternativeName>
    <alternativeName>
        <fullName evidence="1">AGOG</fullName>
    </alternativeName>
    <alternativeName>
        <fullName evidence="1">DNA-(apurinic or apyrimidinic site) lyase</fullName>
        <shortName evidence="1">AP lyase</shortName>
        <ecNumber evidence="1">4.2.99.18</ecNumber>
    </alternativeName>
</protein>
<comment type="function">
    <text evidence="1">DNA repair enzyme that is part of the base excision repair (BER) pathway; protects from oxidative damage by removing the major product of DNA oxidation, 8-oxoguanine (GO), from single- and double-stranded DNA substrates.</text>
</comment>
<comment type="catalytic activity">
    <reaction evidence="1">
        <text>2'-deoxyribonucleotide-(2'-deoxyribose 5'-phosphate)-2'-deoxyribonucleotide-DNA = a 3'-end 2'-deoxyribonucleotide-(2,3-dehydro-2,3-deoxyribose 5'-phosphate)-DNA + a 5'-end 5'-phospho-2'-deoxyribonucleoside-DNA + H(+)</text>
        <dbReference type="Rhea" id="RHEA:66592"/>
        <dbReference type="Rhea" id="RHEA-COMP:13180"/>
        <dbReference type="Rhea" id="RHEA-COMP:16897"/>
        <dbReference type="Rhea" id="RHEA-COMP:17067"/>
        <dbReference type="ChEBI" id="CHEBI:15378"/>
        <dbReference type="ChEBI" id="CHEBI:136412"/>
        <dbReference type="ChEBI" id="CHEBI:157695"/>
        <dbReference type="ChEBI" id="CHEBI:167181"/>
        <dbReference type="EC" id="4.2.99.18"/>
    </reaction>
</comment>
<comment type="domain">
    <text>Contains two alpha-helical subdomains, with the 8-oxoguanine binding site located in a cleft at their interface. Contains a helix-hairpin-helix (HhH) structural motif and a Gly/Pro-rich sequence followed by a conserved Asp (HhH-GPD motif).</text>
</comment>
<comment type="similarity">
    <text evidence="1">Belongs to the archaeal N-glycosylase/DNA lyase (AGOG) family.</text>
</comment>
<reference key="1">
    <citation type="journal article" date="2002" name="Proc. Natl. Acad. Sci. U.S.A.">
        <title>The complete genome of hyperthermophile Methanopyrus kandleri AV19 and monophyly of archaeal methanogens.</title>
        <authorList>
            <person name="Slesarev A.I."/>
            <person name="Mezhevaya K.V."/>
            <person name="Makarova K.S."/>
            <person name="Polushin N.N."/>
            <person name="Shcherbinina O.V."/>
            <person name="Shakhova V.V."/>
            <person name="Belova G.I."/>
            <person name="Aravind L."/>
            <person name="Natale D.A."/>
            <person name="Rogozin I.B."/>
            <person name="Tatusov R.L."/>
            <person name="Wolf Y.I."/>
            <person name="Stetter K.O."/>
            <person name="Malykh A.G."/>
            <person name="Koonin E.V."/>
            <person name="Kozyavkin S.A."/>
        </authorList>
    </citation>
    <scope>NUCLEOTIDE SEQUENCE [LARGE SCALE GENOMIC DNA]</scope>
    <source>
        <strain>AV19 / DSM 6324 / JCM 9639 / NBRC 100938</strain>
    </source>
</reference>
<gene>
    <name type="ordered locus">MK0541</name>
</gene>
<sequence>MTVPTFLRKVTLREICVIEEYVDVQYRAIEALMDTLPSTDLVRLTVANALVSYQLSSSGEDWWREFSSYFRERRPRDIVREYARFLPRSRGNRRLIRQKLRRLHRAKAFLEELSWQDAKSYYRDMNRLRLDLARVLNADPESKTIVFTVKMFGYALRAITGRFRPYPFEIPIPVDARIERITRRITNDDPQLYWDSIARRTGIPPLHLDSILWVGTSRDPEVKRLLAKVLPKLIGELEMLGN</sequence>
<proteinExistence type="inferred from homology"/>